<evidence type="ECO:0000250" key="1"/>
<evidence type="ECO:0000305" key="2"/>
<comment type="catalytic activity">
    <reaction>
        <text>a primary alcohol + NAD(+) = an aldehyde + NADH + H(+)</text>
        <dbReference type="Rhea" id="RHEA:10736"/>
        <dbReference type="ChEBI" id="CHEBI:15378"/>
        <dbReference type="ChEBI" id="CHEBI:15734"/>
        <dbReference type="ChEBI" id="CHEBI:17478"/>
        <dbReference type="ChEBI" id="CHEBI:57540"/>
        <dbReference type="ChEBI" id="CHEBI:57945"/>
        <dbReference type="EC" id="1.1.1.1"/>
    </reaction>
</comment>
<comment type="catalytic activity">
    <reaction>
        <text>a secondary alcohol + NAD(+) = a ketone + NADH + H(+)</text>
        <dbReference type="Rhea" id="RHEA:10740"/>
        <dbReference type="ChEBI" id="CHEBI:15378"/>
        <dbReference type="ChEBI" id="CHEBI:17087"/>
        <dbReference type="ChEBI" id="CHEBI:35681"/>
        <dbReference type="ChEBI" id="CHEBI:57540"/>
        <dbReference type="ChEBI" id="CHEBI:57945"/>
        <dbReference type="EC" id="1.1.1.1"/>
    </reaction>
</comment>
<comment type="cofactor">
    <cofactor evidence="1">
        <name>Zn(2+)</name>
        <dbReference type="ChEBI" id="CHEBI:29105"/>
    </cofactor>
    <text evidence="1">Binds 2 Zn(2+) ions per subunit.</text>
</comment>
<comment type="subunit">
    <text evidence="1">Homodimer.</text>
</comment>
<comment type="subcellular location">
    <subcellularLocation>
        <location>Cytoplasm</location>
    </subcellularLocation>
</comment>
<comment type="similarity">
    <text evidence="2">Belongs to the zinc-containing alcohol dehydrogenase family. Class-II subfamily.</text>
</comment>
<name>ADHQ_RABIT</name>
<protein>
    <recommendedName>
        <fullName>Alcohol dehydrogenase class-2 isozyme 2</fullName>
        <ecNumber>1.1.1.1</ecNumber>
    </recommendedName>
</protein>
<accession>O46650</accession>
<sequence length="379" mass="40497">MSTKGKVIKCKAAIAWEAGKPLSIEEVEVAPPKAHEVRVQIIAASVCRSDTYVINPAFKEGLLPVILGHECAGIVESVGPGVNNFKPGDKVIPLYVPHCRKCKFCQSPLTNFCTKFSEHKNPIIEQELMDDKTSRFTCKGKSIYHFLGISAFSQYTVVKDINLAKIDDDANLKRVCLIGCGFSTGYGAAINDAKVTPGSTCAVFGLGGVGLSAVIGCKTAGASRIIAVDINSDKFAKAKALGATDCLNPRELNKPVQDVIVEMTNGGVDFAIDCAGGSEVMKATVDCTTVGWGSCTFVGVNVNDKGLTISPVELILGRTLRGSSFGGWDVDTVPKLVSDYKNGKFNLEALVTHTLPFEKINEALDLLKQGKSIRTILIY</sequence>
<proteinExistence type="evidence at transcript level"/>
<reference key="1">
    <citation type="journal article" date="1998" name="Eur. J. Biochem.">
        <title>Structural and functional divergence of class II alcohol dehydrogenase -- cloning and characterisation of rabbit liver isoforms of the enzyme.</title>
        <authorList>
            <person name="Svensson S."/>
            <person name="Hedberg J."/>
            <person name="Hoeoeg J.-O."/>
        </authorList>
    </citation>
    <scope>NUCLEOTIDE SEQUENCE [MRNA]</scope>
    <source>
        <strain>New Zealand white</strain>
        <tissue>Liver</tissue>
    </source>
</reference>
<feature type="chain" id="PRO_0000160685" description="Alcohol dehydrogenase class-2 isozyme 2">
    <location>
        <begin position="1"/>
        <end position="379"/>
    </location>
</feature>
<feature type="binding site" evidence="1">
    <location>
        <position position="47"/>
    </location>
    <ligand>
        <name>Zn(2+)</name>
        <dbReference type="ChEBI" id="CHEBI:29105"/>
        <label>1</label>
        <note>catalytic</note>
    </ligand>
</feature>
<feature type="binding site" evidence="1">
    <location>
        <position position="69"/>
    </location>
    <ligand>
        <name>Zn(2+)</name>
        <dbReference type="ChEBI" id="CHEBI:29105"/>
        <label>1</label>
        <note>catalytic</note>
    </ligand>
</feature>
<feature type="binding site" evidence="1">
    <location>
        <position position="99"/>
    </location>
    <ligand>
        <name>Zn(2+)</name>
        <dbReference type="ChEBI" id="CHEBI:29105"/>
        <label>2</label>
    </ligand>
</feature>
<feature type="binding site" evidence="1">
    <location>
        <position position="102"/>
    </location>
    <ligand>
        <name>Zn(2+)</name>
        <dbReference type="ChEBI" id="CHEBI:29105"/>
        <label>2</label>
    </ligand>
</feature>
<feature type="binding site" evidence="1">
    <location>
        <position position="105"/>
    </location>
    <ligand>
        <name>Zn(2+)</name>
        <dbReference type="ChEBI" id="CHEBI:29105"/>
        <label>2</label>
    </ligand>
</feature>
<feature type="binding site" evidence="1">
    <location>
        <position position="113"/>
    </location>
    <ligand>
        <name>Zn(2+)</name>
        <dbReference type="ChEBI" id="CHEBI:29105"/>
        <label>2</label>
    </ligand>
</feature>
<feature type="binding site" evidence="1">
    <location>
        <position position="176"/>
    </location>
    <ligand>
        <name>Zn(2+)</name>
        <dbReference type="ChEBI" id="CHEBI:29105"/>
        <label>1</label>
        <note>catalytic</note>
    </ligand>
</feature>
<feature type="binding site" evidence="1">
    <location>
        <begin position="205"/>
        <end position="210"/>
    </location>
    <ligand>
        <name>NAD(+)</name>
        <dbReference type="ChEBI" id="CHEBI:57540"/>
    </ligand>
</feature>
<feature type="binding site" evidence="1">
    <location>
        <position position="229"/>
    </location>
    <ligand>
        <name>NAD(+)</name>
        <dbReference type="ChEBI" id="CHEBI:57540"/>
    </ligand>
</feature>
<feature type="binding site" evidence="1">
    <location>
        <position position="234"/>
    </location>
    <ligand>
        <name>NAD(+)</name>
        <dbReference type="ChEBI" id="CHEBI:57540"/>
    </ligand>
</feature>
<feature type="binding site" evidence="1">
    <location>
        <begin position="298"/>
        <end position="300"/>
    </location>
    <ligand>
        <name>NAD(+)</name>
        <dbReference type="ChEBI" id="CHEBI:57540"/>
    </ligand>
</feature>
<feature type="binding site" evidence="1">
    <location>
        <position position="374"/>
    </location>
    <ligand>
        <name>NAD(+)</name>
        <dbReference type="ChEBI" id="CHEBI:57540"/>
    </ligand>
</feature>
<dbReference type="EC" id="1.1.1.1"/>
<dbReference type="EMBL" id="AJ002389">
    <property type="protein sequence ID" value="CAA05363.1"/>
    <property type="molecule type" value="mRNA"/>
</dbReference>
<dbReference type="RefSeq" id="NP_001171758.1">
    <property type="nucleotide sequence ID" value="NM_001184829.1"/>
</dbReference>
<dbReference type="SMR" id="O46650"/>
<dbReference type="FunCoup" id="O46650">
    <property type="interactions" value="7"/>
</dbReference>
<dbReference type="STRING" id="9986.ENSOCUP00000041506"/>
<dbReference type="PaxDb" id="9986-ENSOCUP00000021279"/>
<dbReference type="GeneID" id="100345521"/>
<dbReference type="KEGG" id="ocu:100345521"/>
<dbReference type="CTD" id="100345521"/>
<dbReference type="eggNOG" id="KOG0022">
    <property type="taxonomic scope" value="Eukaryota"/>
</dbReference>
<dbReference type="HOGENOM" id="CLU_026673_14_0_1"/>
<dbReference type="InParanoid" id="O46650"/>
<dbReference type="OMA" id="WGTCAIV"/>
<dbReference type="OrthoDB" id="417550at2759"/>
<dbReference type="TreeFam" id="TF300429"/>
<dbReference type="Proteomes" id="UP000001811">
    <property type="component" value="Unplaced"/>
</dbReference>
<dbReference type="ExpressionAtlas" id="O46650">
    <property type="expression patterns" value="baseline"/>
</dbReference>
<dbReference type="GO" id="GO:0005829">
    <property type="term" value="C:cytosol"/>
    <property type="evidence" value="ECO:0007669"/>
    <property type="project" value="TreeGrafter"/>
</dbReference>
<dbReference type="GO" id="GO:0004022">
    <property type="term" value="F:alcohol dehydrogenase (NAD+) activity"/>
    <property type="evidence" value="ECO:0007669"/>
    <property type="project" value="UniProtKB-EC"/>
</dbReference>
<dbReference type="GO" id="GO:0051903">
    <property type="term" value="F:S-(hydroxymethyl)glutathione dehydrogenase [NAD(P)+] activity"/>
    <property type="evidence" value="ECO:0007669"/>
    <property type="project" value="TreeGrafter"/>
</dbReference>
<dbReference type="GO" id="GO:0008270">
    <property type="term" value="F:zinc ion binding"/>
    <property type="evidence" value="ECO:0007669"/>
    <property type="project" value="InterPro"/>
</dbReference>
<dbReference type="GO" id="GO:0046294">
    <property type="term" value="P:formaldehyde catabolic process"/>
    <property type="evidence" value="ECO:0007669"/>
    <property type="project" value="TreeGrafter"/>
</dbReference>
<dbReference type="CDD" id="cd08299">
    <property type="entry name" value="alcohol_DH_class_I_II_IV"/>
    <property type="match status" value="1"/>
</dbReference>
<dbReference type="FunFam" id="3.90.180.10:FF:000067">
    <property type="entry name" value="alcohol dehydrogenase 1-like isoform X1"/>
    <property type="match status" value="1"/>
</dbReference>
<dbReference type="FunFam" id="3.40.50.720:FF:000003">
    <property type="entry name" value="S-(hydroxymethyl)glutathione dehydrogenase"/>
    <property type="match status" value="1"/>
</dbReference>
<dbReference type="Gene3D" id="3.90.180.10">
    <property type="entry name" value="Medium-chain alcohol dehydrogenases, catalytic domain"/>
    <property type="match status" value="1"/>
</dbReference>
<dbReference type="Gene3D" id="3.40.50.720">
    <property type="entry name" value="NAD(P)-binding Rossmann-like Domain"/>
    <property type="match status" value="1"/>
</dbReference>
<dbReference type="InterPro" id="IPR013149">
    <property type="entry name" value="ADH-like_C"/>
</dbReference>
<dbReference type="InterPro" id="IPR013154">
    <property type="entry name" value="ADH-like_N"/>
</dbReference>
<dbReference type="InterPro" id="IPR002328">
    <property type="entry name" value="ADH_Zn_CS"/>
</dbReference>
<dbReference type="InterPro" id="IPR011032">
    <property type="entry name" value="GroES-like_sf"/>
</dbReference>
<dbReference type="InterPro" id="IPR036291">
    <property type="entry name" value="NAD(P)-bd_dom_sf"/>
</dbReference>
<dbReference type="InterPro" id="IPR020843">
    <property type="entry name" value="PKS_ER"/>
</dbReference>
<dbReference type="PANTHER" id="PTHR43880">
    <property type="entry name" value="ALCOHOL DEHYDROGENASE"/>
    <property type="match status" value="1"/>
</dbReference>
<dbReference type="PANTHER" id="PTHR43880:SF14">
    <property type="entry name" value="ALL-TRANS-RETINOL DEHYDROGENASE [NAD(+)] ADH4"/>
    <property type="match status" value="1"/>
</dbReference>
<dbReference type="Pfam" id="PF08240">
    <property type="entry name" value="ADH_N"/>
    <property type="match status" value="1"/>
</dbReference>
<dbReference type="Pfam" id="PF00107">
    <property type="entry name" value="ADH_zinc_N"/>
    <property type="match status" value="1"/>
</dbReference>
<dbReference type="SMART" id="SM00829">
    <property type="entry name" value="PKS_ER"/>
    <property type="match status" value="1"/>
</dbReference>
<dbReference type="SUPFAM" id="SSF50129">
    <property type="entry name" value="GroES-like"/>
    <property type="match status" value="2"/>
</dbReference>
<dbReference type="SUPFAM" id="SSF51735">
    <property type="entry name" value="NAD(P)-binding Rossmann-fold domains"/>
    <property type="match status" value="1"/>
</dbReference>
<dbReference type="PROSITE" id="PS00059">
    <property type="entry name" value="ADH_ZINC"/>
    <property type="match status" value="1"/>
</dbReference>
<organism>
    <name type="scientific">Oryctolagus cuniculus</name>
    <name type="common">Rabbit</name>
    <dbReference type="NCBI Taxonomy" id="9986"/>
    <lineage>
        <taxon>Eukaryota</taxon>
        <taxon>Metazoa</taxon>
        <taxon>Chordata</taxon>
        <taxon>Craniata</taxon>
        <taxon>Vertebrata</taxon>
        <taxon>Euteleostomi</taxon>
        <taxon>Mammalia</taxon>
        <taxon>Eutheria</taxon>
        <taxon>Euarchontoglires</taxon>
        <taxon>Glires</taxon>
        <taxon>Lagomorpha</taxon>
        <taxon>Leporidae</taxon>
        <taxon>Oryctolagus</taxon>
    </lineage>
</organism>
<gene>
    <name type="primary">ADH2-2</name>
</gene>
<keyword id="KW-0963">Cytoplasm</keyword>
<keyword id="KW-0479">Metal-binding</keyword>
<keyword id="KW-0520">NAD</keyword>
<keyword id="KW-0560">Oxidoreductase</keyword>
<keyword id="KW-1185">Reference proteome</keyword>
<keyword id="KW-0862">Zinc</keyword>